<evidence type="ECO:0000250" key="1"/>
<evidence type="ECO:0000255" key="2"/>
<evidence type="ECO:0000255" key="3">
    <source>
        <dbReference type="PROSITE-ProRule" id="PRU00210"/>
    </source>
</evidence>
<evidence type="ECO:0000255" key="4">
    <source>
        <dbReference type="PROSITE-ProRule" id="PRU00233"/>
    </source>
</evidence>
<evidence type="ECO:0000255" key="5">
    <source>
        <dbReference type="PROSITE-ProRule" id="PRU00276"/>
    </source>
</evidence>
<evidence type="ECO:0000256" key="6">
    <source>
        <dbReference type="SAM" id="MobiDB-lite"/>
    </source>
</evidence>
<evidence type="ECO:0000305" key="7"/>
<feature type="signal peptide" evidence="2">
    <location>
        <begin position="1"/>
        <end position="47"/>
    </location>
</feature>
<feature type="propeptide" id="PRO_0000437534" evidence="1">
    <location>
        <begin position="48"/>
        <end position="284"/>
    </location>
</feature>
<feature type="chain" id="PRO_0000042164" description="A disintegrin and metalloproteinase with thrombospondin motifs 18">
    <location>
        <begin position="285"/>
        <end position="1219"/>
    </location>
</feature>
<feature type="domain" description="Peptidase M12B" evidence="5">
    <location>
        <begin position="293"/>
        <end position="498"/>
    </location>
</feature>
<feature type="domain" description="TSP type-1 1" evidence="3">
    <location>
        <begin position="589"/>
        <end position="644"/>
    </location>
</feature>
<feature type="domain" description="TSP type-1 2" evidence="3">
    <location>
        <begin position="931"/>
        <end position="990"/>
    </location>
</feature>
<feature type="domain" description="TSP type-1 3" evidence="3">
    <location>
        <begin position="991"/>
        <end position="1049"/>
    </location>
</feature>
<feature type="domain" description="TSP type-1 4" evidence="3">
    <location>
        <begin position="1052"/>
        <end position="1116"/>
    </location>
</feature>
<feature type="domain" description="TSP type-1 5" evidence="3">
    <location>
        <begin position="1121"/>
        <end position="1176"/>
    </location>
</feature>
<feature type="domain" description="PLAC" evidence="4">
    <location>
        <begin position="1182"/>
        <end position="1219"/>
    </location>
</feature>
<feature type="region of interest" description="Disordered" evidence="6">
    <location>
        <begin position="217"/>
        <end position="248"/>
    </location>
</feature>
<feature type="compositionally biased region" description="Polar residues" evidence="6">
    <location>
        <begin position="218"/>
        <end position="241"/>
    </location>
</feature>
<feature type="active site" evidence="5">
    <location>
        <position position="437"/>
    </location>
</feature>
<feature type="binding site" evidence="5">
    <location>
        <position position="436"/>
    </location>
    <ligand>
        <name>Zn(2+)</name>
        <dbReference type="ChEBI" id="CHEBI:29105"/>
        <note>catalytic</note>
    </ligand>
</feature>
<feature type="binding site" evidence="5">
    <location>
        <position position="440"/>
    </location>
    <ligand>
        <name>Zn(2+)</name>
        <dbReference type="ChEBI" id="CHEBI:29105"/>
        <note>catalytic</note>
    </ligand>
</feature>
<feature type="binding site" evidence="5">
    <location>
        <position position="446"/>
    </location>
    <ligand>
        <name>Zn(2+)</name>
        <dbReference type="ChEBI" id="CHEBI:29105"/>
        <note>catalytic</note>
    </ligand>
</feature>
<feature type="glycosylation site" description="N-linked (GlcNAc...) asparagine" evidence="2">
    <location>
        <position position="151"/>
    </location>
</feature>
<feature type="glycosylation site" description="N-linked (GlcNAc...) asparagine" evidence="2">
    <location>
        <position position="190"/>
    </location>
</feature>
<feature type="glycosylation site" description="N-linked (GlcNAc...) asparagine" evidence="2">
    <location>
        <position position="745"/>
    </location>
</feature>
<feature type="glycosylation site" description="N-linked (GlcNAc...) asparagine" evidence="2">
    <location>
        <position position="838"/>
    </location>
</feature>
<feature type="glycosylation site" description="N-linked (GlcNAc...) asparagine" evidence="2">
    <location>
        <position position="865"/>
    </location>
</feature>
<feature type="glycosylation site" description="N-linked (GlcNAc...) asparagine" evidence="2">
    <location>
        <position position="909"/>
    </location>
</feature>
<feature type="disulfide bond" evidence="1">
    <location>
        <begin position="369"/>
        <end position="420"/>
    </location>
</feature>
<feature type="disulfide bond" evidence="1">
    <location>
        <begin position="395"/>
        <end position="402"/>
    </location>
</feature>
<feature type="disulfide bond" evidence="1">
    <location>
        <begin position="414"/>
        <end position="493"/>
    </location>
</feature>
<feature type="disulfide bond" evidence="1">
    <location>
        <begin position="453"/>
        <end position="477"/>
    </location>
</feature>
<feature type="disulfide bond" evidence="1">
    <location>
        <begin position="521"/>
        <end position="546"/>
    </location>
</feature>
<feature type="disulfide bond" evidence="1">
    <location>
        <begin position="532"/>
        <end position="553"/>
    </location>
</feature>
<feature type="disulfide bond" evidence="1">
    <location>
        <begin position="541"/>
        <end position="572"/>
    </location>
</feature>
<feature type="disulfide bond" evidence="1">
    <location>
        <begin position="566"/>
        <end position="577"/>
    </location>
</feature>
<feature type="disulfide bond" evidence="1">
    <location>
        <begin position="601"/>
        <end position="638"/>
    </location>
</feature>
<feature type="disulfide bond" evidence="1">
    <location>
        <begin position="605"/>
        <end position="643"/>
    </location>
</feature>
<feature type="disulfide bond" evidence="1">
    <location>
        <begin position="616"/>
        <end position="628"/>
    </location>
</feature>
<feature type="sequence conflict" description="In Ref. 2; AAH94674." evidence="7" ref="2">
    <original>S</original>
    <variation>P</variation>
    <location>
        <position position="96"/>
    </location>
</feature>
<feature type="sequence conflict" description="In Ref. 2; AAH94674." evidence="7" ref="2">
    <original>H</original>
    <variation>L</variation>
    <location>
        <position position="189"/>
    </location>
</feature>
<feature type="sequence conflict" description="In Ref. 3; BAC29190." evidence="7" ref="3">
    <original>STPQAGCLVDE</original>
    <variation>RTPRCIAFLTG</variation>
    <location>
        <begin position="487"/>
        <end position="497"/>
    </location>
</feature>
<comment type="cofactor">
    <cofactor evidence="1">
        <name>Zn(2+)</name>
        <dbReference type="ChEBI" id="CHEBI:29105"/>
    </cofactor>
    <text evidence="1">Binds 1 zinc ion per subunit.</text>
</comment>
<comment type="subcellular location">
    <subcellularLocation>
        <location evidence="1">Secreted</location>
        <location evidence="1">Extracellular space</location>
        <location evidence="1">Extracellular matrix</location>
    </subcellularLocation>
</comment>
<comment type="PTM">
    <text evidence="1">The precursor is cleaved by a furin endopeptidase.</text>
</comment>
<comment type="PTM">
    <text evidence="1">Glycosylated. Can be O-fucosylated by POFUT2 on a serine or a threonine residue found within the consensus sequence C1-X(2)-(S/T)-C2-G of the TSP type-1 repeat domains where C1 and C2 are the first and second cysteine residue of the repeat, respectively. Fucosylated repeats can then be further glycosylated by the addition of a beta-1,3-glucose residue by the glucosyltransferase, B3GALTL. Fucosylation mediates the efficient secretion of ADAMTS family members. Can also be C-glycosylated with one or two mannose molecules on tryptophan residues within the consensus sequence W-X-X-W of the TPRs, and N-glycosylated. These other glycosylations can also facilitate secretion (By similarity).</text>
</comment>
<sequence length="1219" mass="135244">MECALLCLCALRAAGPGPPWGPAGLGRLAKALQLCCFCCASVAVALASDSGSSGGSGLNDDYVFVVPVEVDSGGSYISHDILHHRKRRSAHGASNSLHYRVSAFGQDLHLELKPSAILSSHFRVQVLGKDGASETREPEVPQCLYQGFIRNDSSSSVAVSTCAGLSGLIRTRDNEFLISPLPQLLAQEHNYSSPAGHHPHVLYKRTAEKRVRWYQDYPGSQRTYPGHSPSHTPPASQSQEPEYSHRRWQKRHFCGRRKKYAPKPPAEDAYLRFDEYGGTGRPRRSAGKSQNGLNVETLVVADAKMVEKHGKDDVTTYILTVMNMVSSLFKDGTIGSDINIVVVSLILLEEEPEGLLINHHADQSLNSFCQWQSALVGKNGKRHDHAILLTGFDICSWKNEPCDTLGFAPISGMCSKYRSCTINEDTGLGLAFTIAHESGHNFGMVHDGEGNPCRKAEGNIMSPTLTGNNGVFSWSSCSRQYLKKFLSTPQAGCLVDEPKQTGQYKYPDKLPGQIYDADMQCKWQFGAKAKLCSLGVMKDICKSLWCHRVGHRCETKFMPAAEGTACGLSMWCRQGQCVKLGELGPRPIHGQWSAWSKWSECSRTCGGGVKFQERHCSNPKPQYGGKYCPGSSRIYKLCNINPCPENSLDFRAQQCAEYNNKPFRGWLYRWKPYTKVEEEDRCKLYCKAENFEFFFAMSGKVKDGTPCSPHRNDVCIDGICELVGCDHELGSKAVSDACGVCKGDNSTCKFYKGLYLSQHKANEYYPVVTIPAGARSIEIQELQLSSSYLAVRSLSQKYYLTGGWSIDWPGDFTFAGTTFEYQRSFNRPERLYAPGPTNETLVFEILTQGKNPGIAWKYALPKVMNVTQPATKRYHHTWRTVQSDCSVTCGGGYISIKAICLRDQHTQVNSSFCSVRTKPATEPKICNAFSCPAYWLPGEWSACSKSCAGGQQSRKIRCVQKKPFQKEEAVLHSLCPVSTPTQVQVCNSHACPPEWSPSPWSQCSKTCGRGVRRREVLCKSPAAETLPESLCSSSPRPEAQEGCVLGRCPKNNRLQWIASAWSECSATCGLGVRKRELKCVEKTLQGKLITFPERRCRNIKKPSLELEEACNQRTCPVYSMAVASWYSSPWQQCTVTCGGGVQTRSVHCMQQGRPSSSCLLHQKPPVLRACNTNFCPAPEKKDDPSCVDFFSWCHLVPQHGVCNHKFYGKQCCRSCTRKS</sequence>
<dbReference type="EC" id="3.4.24.-"/>
<dbReference type="EMBL" id="AC108856">
    <property type="status" value="NOT_ANNOTATED_CDS"/>
    <property type="molecule type" value="Genomic_DNA"/>
</dbReference>
<dbReference type="EMBL" id="AC125463">
    <property type="status" value="NOT_ANNOTATED_CDS"/>
    <property type="molecule type" value="Genomic_DNA"/>
</dbReference>
<dbReference type="EMBL" id="BC094674">
    <property type="protein sequence ID" value="AAH94674.1"/>
    <property type="molecule type" value="mRNA"/>
</dbReference>
<dbReference type="EMBL" id="AK035797">
    <property type="protein sequence ID" value="BAC29190.1"/>
    <property type="molecule type" value="mRNA"/>
</dbReference>
<dbReference type="CCDS" id="CCDS40485.1"/>
<dbReference type="RefSeq" id="NP_766054.2">
    <property type="nucleotide sequence ID" value="NM_172466.4"/>
</dbReference>
<dbReference type="SMR" id="Q4VC17"/>
<dbReference type="BioGRID" id="229026">
    <property type="interactions" value="1"/>
</dbReference>
<dbReference type="FunCoup" id="Q4VC17">
    <property type="interactions" value="69"/>
</dbReference>
<dbReference type="STRING" id="10090.ENSMUSP00000090801"/>
<dbReference type="MEROPS" id="M12.030"/>
<dbReference type="GlyCosmos" id="Q4VC17">
    <property type="glycosylation" value="6 sites, No reported glycans"/>
</dbReference>
<dbReference type="GlyGen" id="Q4VC17">
    <property type="glycosylation" value="6 sites"/>
</dbReference>
<dbReference type="iPTMnet" id="Q4VC17"/>
<dbReference type="PhosphoSitePlus" id="Q4VC17"/>
<dbReference type="SwissPalm" id="Q4VC17"/>
<dbReference type="PaxDb" id="10090-ENSMUSP00000090801"/>
<dbReference type="Antibodypedia" id="30389">
    <property type="antibodies" value="151 antibodies from 25 providers"/>
</dbReference>
<dbReference type="DNASU" id="208936"/>
<dbReference type="Ensembl" id="ENSMUST00000093113.5">
    <property type="protein sequence ID" value="ENSMUSP00000090801.5"/>
    <property type="gene ID" value="ENSMUSG00000053399.10"/>
</dbReference>
<dbReference type="GeneID" id="208936"/>
<dbReference type="KEGG" id="mmu:208936"/>
<dbReference type="UCSC" id="uc009nnr.1">
    <property type="organism name" value="mouse"/>
</dbReference>
<dbReference type="AGR" id="MGI:2442600"/>
<dbReference type="CTD" id="170692"/>
<dbReference type="MGI" id="MGI:2442600">
    <property type="gene designation" value="Adamts18"/>
</dbReference>
<dbReference type="VEuPathDB" id="HostDB:ENSMUSG00000053399"/>
<dbReference type="eggNOG" id="KOG3538">
    <property type="taxonomic scope" value="Eukaryota"/>
</dbReference>
<dbReference type="GeneTree" id="ENSGT00940000157553"/>
<dbReference type="HOGENOM" id="CLU_000660_1_0_1"/>
<dbReference type="InParanoid" id="Q4VC17"/>
<dbReference type="OMA" id="ICELVGC"/>
<dbReference type="OrthoDB" id="10035764at2759"/>
<dbReference type="PhylomeDB" id="Q4VC17"/>
<dbReference type="TreeFam" id="TF313537"/>
<dbReference type="Reactome" id="R-MMU-5173214">
    <property type="pathway name" value="O-glycosylation of TSR domain-containing proteins"/>
</dbReference>
<dbReference type="BioGRID-ORCS" id="208936">
    <property type="hits" value="1 hit in 79 CRISPR screens"/>
</dbReference>
<dbReference type="PRO" id="PR:Q4VC17"/>
<dbReference type="Proteomes" id="UP000000589">
    <property type="component" value="Chromosome 8"/>
</dbReference>
<dbReference type="RNAct" id="Q4VC17">
    <property type="molecule type" value="protein"/>
</dbReference>
<dbReference type="Bgee" id="ENSMUSG00000053399">
    <property type="expression patterns" value="Expressed in epithelium of lens and 78 other cell types or tissues"/>
</dbReference>
<dbReference type="ExpressionAtlas" id="Q4VC17">
    <property type="expression patterns" value="baseline and differential"/>
</dbReference>
<dbReference type="GO" id="GO:0005576">
    <property type="term" value="C:extracellular region"/>
    <property type="evidence" value="ECO:0007669"/>
    <property type="project" value="UniProtKB-KW"/>
</dbReference>
<dbReference type="GO" id="GO:0046872">
    <property type="term" value="F:metal ion binding"/>
    <property type="evidence" value="ECO:0007669"/>
    <property type="project" value="UniProtKB-KW"/>
</dbReference>
<dbReference type="GO" id="GO:0004222">
    <property type="term" value="F:metalloendopeptidase activity"/>
    <property type="evidence" value="ECO:0007669"/>
    <property type="project" value="InterPro"/>
</dbReference>
<dbReference type="GO" id="GO:0030198">
    <property type="term" value="P:extracellular matrix organization"/>
    <property type="evidence" value="ECO:0007669"/>
    <property type="project" value="InterPro"/>
</dbReference>
<dbReference type="GO" id="GO:0001654">
    <property type="term" value="P:eye development"/>
    <property type="evidence" value="ECO:0007669"/>
    <property type="project" value="Ensembl"/>
</dbReference>
<dbReference type="GO" id="GO:0090331">
    <property type="term" value="P:negative regulation of platelet aggregation"/>
    <property type="evidence" value="ECO:0000315"/>
    <property type="project" value="MGI"/>
</dbReference>
<dbReference type="GO" id="GO:0006508">
    <property type="term" value="P:proteolysis"/>
    <property type="evidence" value="ECO:0007669"/>
    <property type="project" value="UniProtKB-KW"/>
</dbReference>
<dbReference type="CDD" id="cd04273">
    <property type="entry name" value="ZnMc_ADAMTS_like"/>
    <property type="match status" value="1"/>
</dbReference>
<dbReference type="FunFam" id="2.20.100.10:FF:000006">
    <property type="entry name" value="A disintegrin and metalloproteinase with thrombospondin motifs 1"/>
    <property type="match status" value="1"/>
</dbReference>
<dbReference type="FunFam" id="2.60.120.830:FF:000001">
    <property type="entry name" value="A disintegrin and metalloproteinase with thrombospondin motifs 1"/>
    <property type="match status" value="1"/>
</dbReference>
<dbReference type="FunFam" id="3.40.390.10:FF:000001">
    <property type="entry name" value="A disintegrin and metalloproteinase with thrombospondin motifs 1"/>
    <property type="match status" value="1"/>
</dbReference>
<dbReference type="FunFam" id="3.40.1620.60:FF:000002">
    <property type="entry name" value="A disintegrin and metalloproteinase with thrombospondin motifs 10"/>
    <property type="match status" value="1"/>
</dbReference>
<dbReference type="FunFam" id="2.20.100.10:FF:000066">
    <property type="entry name" value="A disintegrin and metalloproteinase with thrombospondin motifs 18"/>
    <property type="match status" value="1"/>
</dbReference>
<dbReference type="FunFam" id="2.20.100.10:FF:000088">
    <property type="entry name" value="A disintegrin and metalloproteinase with thrombospondin motifs 18"/>
    <property type="match status" value="1"/>
</dbReference>
<dbReference type="FunFam" id="2.20.100.10:FF:000094">
    <property type="entry name" value="ADAM metallopeptidase with thrombospondin type 1 motif, 18"/>
    <property type="match status" value="1"/>
</dbReference>
<dbReference type="FunFam" id="2.20.100.10:FF:000009">
    <property type="entry name" value="ADAMTS-like protein 3 isoform A"/>
    <property type="match status" value="1"/>
</dbReference>
<dbReference type="Gene3D" id="2.60.120.830">
    <property type="match status" value="1"/>
</dbReference>
<dbReference type="Gene3D" id="3.40.1620.60">
    <property type="match status" value="1"/>
</dbReference>
<dbReference type="Gene3D" id="3.40.390.10">
    <property type="entry name" value="Collagenase (Catalytic Domain)"/>
    <property type="match status" value="1"/>
</dbReference>
<dbReference type="Gene3D" id="2.20.100.10">
    <property type="entry name" value="Thrombospondin type-1 (TSP1) repeat"/>
    <property type="match status" value="5"/>
</dbReference>
<dbReference type="InterPro" id="IPR013273">
    <property type="entry name" value="ADAMTS/ADAMTS-like"/>
</dbReference>
<dbReference type="InterPro" id="IPR050439">
    <property type="entry name" value="ADAMTS_ADAMTS-like"/>
</dbReference>
<dbReference type="InterPro" id="IPR041645">
    <property type="entry name" value="ADAMTS_CR_2"/>
</dbReference>
<dbReference type="InterPro" id="IPR045371">
    <property type="entry name" value="ADAMTS_CR_3"/>
</dbReference>
<dbReference type="InterPro" id="IPR010294">
    <property type="entry name" value="ADAMTS_spacer1"/>
</dbReference>
<dbReference type="InterPro" id="IPR024079">
    <property type="entry name" value="MetalloPept_cat_dom_sf"/>
</dbReference>
<dbReference type="InterPro" id="IPR001590">
    <property type="entry name" value="Peptidase_M12B"/>
</dbReference>
<dbReference type="InterPro" id="IPR002870">
    <property type="entry name" value="Peptidase_M12B_N"/>
</dbReference>
<dbReference type="InterPro" id="IPR010909">
    <property type="entry name" value="PLAC"/>
</dbReference>
<dbReference type="InterPro" id="IPR000884">
    <property type="entry name" value="TSP1_rpt"/>
</dbReference>
<dbReference type="InterPro" id="IPR036383">
    <property type="entry name" value="TSP1_rpt_sf"/>
</dbReference>
<dbReference type="PANTHER" id="PTHR13723:SF167">
    <property type="entry name" value="A DISINTEGRIN AND METALLOPROTEINASE WITH THROMBOSPONDIN MOTIFS 18"/>
    <property type="match status" value="1"/>
</dbReference>
<dbReference type="PANTHER" id="PTHR13723">
    <property type="entry name" value="ADAMTS A DISINTEGRIN AND METALLOPROTEASE WITH THROMBOSPONDIN MOTIFS PROTEASE"/>
    <property type="match status" value="1"/>
</dbReference>
<dbReference type="Pfam" id="PF17771">
    <property type="entry name" value="ADAMTS_CR_2"/>
    <property type="match status" value="1"/>
</dbReference>
<dbReference type="Pfam" id="PF19236">
    <property type="entry name" value="ADAMTS_CR_3"/>
    <property type="match status" value="1"/>
</dbReference>
<dbReference type="Pfam" id="PF05986">
    <property type="entry name" value="ADAMTS_spacer1"/>
    <property type="match status" value="1"/>
</dbReference>
<dbReference type="Pfam" id="PF01562">
    <property type="entry name" value="Pep_M12B_propep"/>
    <property type="match status" value="1"/>
</dbReference>
<dbReference type="Pfam" id="PF08686">
    <property type="entry name" value="PLAC"/>
    <property type="match status" value="1"/>
</dbReference>
<dbReference type="Pfam" id="PF01421">
    <property type="entry name" value="Reprolysin"/>
    <property type="match status" value="1"/>
</dbReference>
<dbReference type="Pfam" id="PF19030">
    <property type="entry name" value="TSP1_ADAMTS"/>
    <property type="match status" value="4"/>
</dbReference>
<dbReference type="Pfam" id="PF00090">
    <property type="entry name" value="TSP_1"/>
    <property type="match status" value="1"/>
</dbReference>
<dbReference type="PRINTS" id="PR01857">
    <property type="entry name" value="ADAMTSFAMILY"/>
</dbReference>
<dbReference type="SMART" id="SM00209">
    <property type="entry name" value="TSP1"/>
    <property type="match status" value="6"/>
</dbReference>
<dbReference type="SUPFAM" id="SSF55486">
    <property type="entry name" value="Metalloproteases ('zincins'), catalytic domain"/>
    <property type="match status" value="1"/>
</dbReference>
<dbReference type="SUPFAM" id="SSF82895">
    <property type="entry name" value="TSP-1 type 1 repeat"/>
    <property type="match status" value="5"/>
</dbReference>
<dbReference type="PROSITE" id="PS50215">
    <property type="entry name" value="ADAM_MEPRO"/>
    <property type="match status" value="1"/>
</dbReference>
<dbReference type="PROSITE" id="PS50900">
    <property type="entry name" value="PLAC"/>
    <property type="match status" value="1"/>
</dbReference>
<dbReference type="PROSITE" id="PS50092">
    <property type="entry name" value="TSP1"/>
    <property type="match status" value="5"/>
</dbReference>
<accession>Q4VC17</accession>
<accession>E9QNK0</accession>
<accession>Q8BZD1</accession>
<gene>
    <name type="primary">Adamts18</name>
</gene>
<keyword id="KW-1015">Disulfide bond</keyword>
<keyword id="KW-0272">Extracellular matrix</keyword>
<keyword id="KW-0325">Glycoprotein</keyword>
<keyword id="KW-0378">Hydrolase</keyword>
<keyword id="KW-0479">Metal-binding</keyword>
<keyword id="KW-0482">Metalloprotease</keyword>
<keyword id="KW-0645">Protease</keyword>
<keyword id="KW-1185">Reference proteome</keyword>
<keyword id="KW-0677">Repeat</keyword>
<keyword id="KW-0964">Secreted</keyword>
<keyword id="KW-0732">Signal</keyword>
<keyword id="KW-0862">Zinc</keyword>
<keyword id="KW-0865">Zymogen</keyword>
<name>ATS18_MOUSE</name>
<protein>
    <recommendedName>
        <fullName>A disintegrin and metalloproteinase with thrombospondin motifs 18</fullName>
        <shortName>ADAM-TS 18</shortName>
        <shortName>ADAM-TS18</shortName>
        <shortName>ADAMTS-18</shortName>
        <ecNumber>3.4.24.-</ecNumber>
    </recommendedName>
</protein>
<proteinExistence type="evidence at transcript level"/>
<reference key="1">
    <citation type="journal article" date="2009" name="PLoS Biol.">
        <title>Lineage-specific biology revealed by a finished genome assembly of the mouse.</title>
        <authorList>
            <person name="Church D.M."/>
            <person name="Goodstadt L."/>
            <person name="Hillier L.W."/>
            <person name="Zody M.C."/>
            <person name="Goldstein S."/>
            <person name="She X."/>
            <person name="Bult C.J."/>
            <person name="Agarwala R."/>
            <person name="Cherry J.L."/>
            <person name="DiCuccio M."/>
            <person name="Hlavina W."/>
            <person name="Kapustin Y."/>
            <person name="Meric P."/>
            <person name="Maglott D."/>
            <person name="Birtle Z."/>
            <person name="Marques A.C."/>
            <person name="Graves T."/>
            <person name="Zhou S."/>
            <person name="Teague B."/>
            <person name="Potamousis K."/>
            <person name="Churas C."/>
            <person name="Place M."/>
            <person name="Herschleb J."/>
            <person name="Runnheim R."/>
            <person name="Forrest D."/>
            <person name="Amos-Landgraf J."/>
            <person name="Schwartz D.C."/>
            <person name="Cheng Z."/>
            <person name="Lindblad-Toh K."/>
            <person name="Eichler E.E."/>
            <person name="Ponting C.P."/>
        </authorList>
    </citation>
    <scope>NUCLEOTIDE SEQUENCE [LARGE SCALE GENOMIC DNA]</scope>
    <source>
        <strain>C57BL/6J</strain>
    </source>
</reference>
<reference key="2">
    <citation type="journal article" date="2004" name="Genome Res.">
        <title>The status, quality, and expansion of the NIH full-length cDNA project: the Mammalian Gene Collection (MGC).</title>
        <authorList>
            <consortium name="The MGC Project Team"/>
        </authorList>
    </citation>
    <scope>NUCLEOTIDE SEQUENCE [LARGE SCALE MRNA]</scope>
    <source>
        <strain>C57BL/6J</strain>
        <tissue>Eye</tissue>
    </source>
</reference>
<reference key="3">
    <citation type="journal article" date="2005" name="Science">
        <title>The transcriptional landscape of the mammalian genome.</title>
        <authorList>
            <person name="Carninci P."/>
            <person name="Kasukawa T."/>
            <person name="Katayama S."/>
            <person name="Gough J."/>
            <person name="Frith M.C."/>
            <person name="Maeda N."/>
            <person name="Oyama R."/>
            <person name="Ravasi T."/>
            <person name="Lenhard B."/>
            <person name="Wells C."/>
            <person name="Kodzius R."/>
            <person name="Shimokawa K."/>
            <person name="Bajic V.B."/>
            <person name="Brenner S.E."/>
            <person name="Batalov S."/>
            <person name="Forrest A.R."/>
            <person name="Zavolan M."/>
            <person name="Davis M.J."/>
            <person name="Wilming L.G."/>
            <person name="Aidinis V."/>
            <person name="Allen J.E."/>
            <person name="Ambesi-Impiombato A."/>
            <person name="Apweiler R."/>
            <person name="Aturaliya R.N."/>
            <person name="Bailey T.L."/>
            <person name="Bansal M."/>
            <person name="Baxter L."/>
            <person name="Beisel K.W."/>
            <person name="Bersano T."/>
            <person name="Bono H."/>
            <person name="Chalk A.M."/>
            <person name="Chiu K.P."/>
            <person name="Choudhary V."/>
            <person name="Christoffels A."/>
            <person name="Clutterbuck D.R."/>
            <person name="Crowe M.L."/>
            <person name="Dalla E."/>
            <person name="Dalrymple B.P."/>
            <person name="de Bono B."/>
            <person name="Della Gatta G."/>
            <person name="di Bernardo D."/>
            <person name="Down T."/>
            <person name="Engstrom P."/>
            <person name="Fagiolini M."/>
            <person name="Faulkner G."/>
            <person name="Fletcher C.F."/>
            <person name="Fukushima T."/>
            <person name="Furuno M."/>
            <person name="Futaki S."/>
            <person name="Gariboldi M."/>
            <person name="Georgii-Hemming P."/>
            <person name="Gingeras T.R."/>
            <person name="Gojobori T."/>
            <person name="Green R.E."/>
            <person name="Gustincich S."/>
            <person name="Harbers M."/>
            <person name="Hayashi Y."/>
            <person name="Hensch T.K."/>
            <person name="Hirokawa N."/>
            <person name="Hill D."/>
            <person name="Huminiecki L."/>
            <person name="Iacono M."/>
            <person name="Ikeo K."/>
            <person name="Iwama A."/>
            <person name="Ishikawa T."/>
            <person name="Jakt M."/>
            <person name="Kanapin A."/>
            <person name="Katoh M."/>
            <person name="Kawasawa Y."/>
            <person name="Kelso J."/>
            <person name="Kitamura H."/>
            <person name="Kitano H."/>
            <person name="Kollias G."/>
            <person name="Krishnan S.P."/>
            <person name="Kruger A."/>
            <person name="Kummerfeld S.K."/>
            <person name="Kurochkin I.V."/>
            <person name="Lareau L.F."/>
            <person name="Lazarevic D."/>
            <person name="Lipovich L."/>
            <person name="Liu J."/>
            <person name="Liuni S."/>
            <person name="McWilliam S."/>
            <person name="Madan Babu M."/>
            <person name="Madera M."/>
            <person name="Marchionni L."/>
            <person name="Matsuda H."/>
            <person name="Matsuzawa S."/>
            <person name="Miki H."/>
            <person name="Mignone F."/>
            <person name="Miyake S."/>
            <person name="Morris K."/>
            <person name="Mottagui-Tabar S."/>
            <person name="Mulder N."/>
            <person name="Nakano N."/>
            <person name="Nakauchi H."/>
            <person name="Ng P."/>
            <person name="Nilsson R."/>
            <person name="Nishiguchi S."/>
            <person name="Nishikawa S."/>
            <person name="Nori F."/>
            <person name="Ohara O."/>
            <person name="Okazaki Y."/>
            <person name="Orlando V."/>
            <person name="Pang K.C."/>
            <person name="Pavan W.J."/>
            <person name="Pavesi G."/>
            <person name="Pesole G."/>
            <person name="Petrovsky N."/>
            <person name="Piazza S."/>
            <person name="Reed J."/>
            <person name="Reid J.F."/>
            <person name="Ring B.Z."/>
            <person name="Ringwald M."/>
            <person name="Rost B."/>
            <person name="Ruan Y."/>
            <person name="Salzberg S.L."/>
            <person name="Sandelin A."/>
            <person name="Schneider C."/>
            <person name="Schoenbach C."/>
            <person name="Sekiguchi K."/>
            <person name="Semple C.A."/>
            <person name="Seno S."/>
            <person name="Sessa L."/>
            <person name="Sheng Y."/>
            <person name="Shibata Y."/>
            <person name="Shimada H."/>
            <person name="Shimada K."/>
            <person name="Silva D."/>
            <person name="Sinclair B."/>
            <person name="Sperling S."/>
            <person name="Stupka E."/>
            <person name="Sugiura K."/>
            <person name="Sultana R."/>
            <person name="Takenaka Y."/>
            <person name="Taki K."/>
            <person name="Tammoja K."/>
            <person name="Tan S.L."/>
            <person name="Tang S."/>
            <person name="Taylor M.S."/>
            <person name="Tegner J."/>
            <person name="Teichmann S.A."/>
            <person name="Ueda H.R."/>
            <person name="van Nimwegen E."/>
            <person name="Verardo R."/>
            <person name="Wei C.L."/>
            <person name="Yagi K."/>
            <person name="Yamanishi H."/>
            <person name="Zabarovsky E."/>
            <person name="Zhu S."/>
            <person name="Zimmer A."/>
            <person name="Hide W."/>
            <person name="Bult C."/>
            <person name="Grimmond S.M."/>
            <person name="Teasdale R.D."/>
            <person name="Liu E.T."/>
            <person name="Brusic V."/>
            <person name="Quackenbush J."/>
            <person name="Wahlestedt C."/>
            <person name="Mattick J.S."/>
            <person name="Hume D.A."/>
            <person name="Kai C."/>
            <person name="Sasaki D."/>
            <person name="Tomaru Y."/>
            <person name="Fukuda S."/>
            <person name="Kanamori-Katayama M."/>
            <person name="Suzuki M."/>
            <person name="Aoki J."/>
            <person name="Arakawa T."/>
            <person name="Iida J."/>
            <person name="Imamura K."/>
            <person name="Itoh M."/>
            <person name="Kato T."/>
            <person name="Kawaji H."/>
            <person name="Kawagashira N."/>
            <person name="Kawashima T."/>
            <person name="Kojima M."/>
            <person name="Kondo S."/>
            <person name="Konno H."/>
            <person name="Nakano K."/>
            <person name="Ninomiya N."/>
            <person name="Nishio T."/>
            <person name="Okada M."/>
            <person name="Plessy C."/>
            <person name="Shibata K."/>
            <person name="Shiraki T."/>
            <person name="Suzuki S."/>
            <person name="Tagami M."/>
            <person name="Waki K."/>
            <person name="Watahiki A."/>
            <person name="Okamura-Oho Y."/>
            <person name="Suzuki H."/>
            <person name="Kawai J."/>
            <person name="Hayashizaki Y."/>
        </authorList>
    </citation>
    <scope>NUCLEOTIDE SEQUENCE [LARGE SCALE MRNA] OF 1-497</scope>
    <source>
        <strain>C57BL/6J</strain>
        <tissue>Cerebellum</tissue>
    </source>
</reference>
<organism>
    <name type="scientific">Mus musculus</name>
    <name type="common">Mouse</name>
    <dbReference type="NCBI Taxonomy" id="10090"/>
    <lineage>
        <taxon>Eukaryota</taxon>
        <taxon>Metazoa</taxon>
        <taxon>Chordata</taxon>
        <taxon>Craniata</taxon>
        <taxon>Vertebrata</taxon>
        <taxon>Euteleostomi</taxon>
        <taxon>Mammalia</taxon>
        <taxon>Eutheria</taxon>
        <taxon>Euarchontoglires</taxon>
        <taxon>Glires</taxon>
        <taxon>Rodentia</taxon>
        <taxon>Myomorpha</taxon>
        <taxon>Muroidea</taxon>
        <taxon>Muridae</taxon>
        <taxon>Murinae</taxon>
        <taxon>Mus</taxon>
        <taxon>Mus</taxon>
    </lineage>
</organism>